<accession>A7GE43</accession>
<sequence length="311" mass="36231">MIDLLIIAGPTAVGKTDISIKLAEKLNGEIISADSMQIYKYMDIGSAKITKDEMKGIPHHLIDVVEPHEEFNVSSFKALAEESIKDIWNRGKLPIIAGGTGLYINSLIYNYDFTDADRDEKYREYLTKLAEDKGKEYVHSLLKDIDEESYEKLYPNDLKRVVRALEVYKITGKSISEYTKENEKKLYDIPYNVNYFILNMNREVLYERINKRVDIMMGKGLIEEVKKLESMGYTPDMQSMKGIGYKEVLFYLNGDISLDEAIYLIKKGSRNYAKRQLTWFRKDKRSIWIDKDKYNSEEEIVDKIIKMVKDK</sequence>
<feature type="chain" id="PRO_1000020587" description="tRNA dimethylallyltransferase">
    <location>
        <begin position="1"/>
        <end position="311"/>
    </location>
</feature>
<feature type="region of interest" description="Interaction with substrate tRNA" evidence="1">
    <location>
        <begin position="34"/>
        <end position="37"/>
    </location>
</feature>
<feature type="binding site" evidence="1">
    <location>
        <begin position="9"/>
        <end position="16"/>
    </location>
    <ligand>
        <name>ATP</name>
        <dbReference type="ChEBI" id="CHEBI:30616"/>
    </ligand>
</feature>
<feature type="binding site" evidence="1">
    <location>
        <begin position="11"/>
        <end position="16"/>
    </location>
    <ligand>
        <name>substrate</name>
    </ligand>
</feature>
<feature type="site" description="Interaction with substrate tRNA" evidence="1">
    <location>
        <position position="100"/>
    </location>
</feature>
<feature type="site" description="Interaction with substrate tRNA" evidence="1">
    <location>
        <position position="123"/>
    </location>
</feature>
<proteinExistence type="inferred from homology"/>
<evidence type="ECO:0000255" key="1">
    <source>
        <dbReference type="HAMAP-Rule" id="MF_00185"/>
    </source>
</evidence>
<comment type="function">
    <text evidence="1">Catalyzes the transfer of a dimethylallyl group onto the adenine at position 37 in tRNAs that read codons beginning with uridine, leading to the formation of N6-(dimethylallyl)adenosine (i(6)A).</text>
</comment>
<comment type="catalytic activity">
    <reaction evidence="1">
        <text>adenosine(37) in tRNA + dimethylallyl diphosphate = N(6)-dimethylallyladenosine(37) in tRNA + diphosphate</text>
        <dbReference type="Rhea" id="RHEA:26482"/>
        <dbReference type="Rhea" id="RHEA-COMP:10162"/>
        <dbReference type="Rhea" id="RHEA-COMP:10375"/>
        <dbReference type="ChEBI" id="CHEBI:33019"/>
        <dbReference type="ChEBI" id="CHEBI:57623"/>
        <dbReference type="ChEBI" id="CHEBI:74411"/>
        <dbReference type="ChEBI" id="CHEBI:74415"/>
        <dbReference type="EC" id="2.5.1.75"/>
    </reaction>
</comment>
<comment type="cofactor">
    <cofactor evidence="1">
        <name>Mg(2+)</name>
        <dbReference type="ChEBI" id="CHEBI:18420"/>
    </cofactor>
</comment>
<comment type="subunit">
    <text evidence="1">Monomer.</text>
</comment>
<comment type="similarity">
    <text evidence="1">Belongs to the IPP transferase family.</text>
</comment>
<keyword id="KW-0067">ATP-binding</keyword>
<keyword id="KW-0460">Magnesium</keyword>
<keyword id="KW-0547">Nucleotide-binding</keyword>
<keyword id="KW-0808">Transferase</keyword>
<keyword id="KW-0819">tRNA processing</keyword>
<name>MIAA_CLOBL</name>
<protein>
    <recommendedName>
        <fullName evidence="1">tRNA dimethylallyltransferase</fullName>
        <ecNumber evidence="1">2.5.1.75</ecNumber>
    </recommendedName>
    <alternativeName>
        <fullName evidence="1">Dimethylallyl diphosphate:tRNA dimethylallyltransferase</fullName>
        <shortName evidence="1">DMAPP:tRNA dimethylallyltransferase</shortName>
        <shortName evidence="1">DMATase</shortName>
    </alternativeName>
    <alternativeName>
        <fullName evidence="1">Isopentenyl-diphosphate:tRNA isopentenyltransferase</fullName>
        <shortName evidence="1">IPP transferase</shortName>
        <shortName evidence="1">IPPT</shortName>
        <shortName evidence="1">IPTase</shortName>
    </alternativeName>
</protein>
<reference key="1">
    <citation type="submission" date="2007-06" db="EMBL/GenBank/DDBJ databases">
        <authorList>
            <person name="Brinkac L.M."/>
            <person name="Daugherty S."/>
            <person name="Dodson R.J."/>
            <person name="Madupu R."/>
            <person name="Brown J.L."/>
            <person name="Bruce D."/>
            <person name="Detter C."/>
            <person name="Munk C."/>
            <person name="Smith L.A."/>
            <person name="Smith T.J."/>
            <person name="White O."/>
            <person name="Brettin T.S."/>
        </authorList>
    </citation>
    <scope>NUCLEOTIDE SEQUENCE [LARGE SCALE GENOMIC DNA]</scope>
    <source>
        <strain>Langeland / NCTC 10281 / Type F</strain>
    </source>
</reference>
<gene>
    <name evidence="1" type="primary">miaA</name>
    <name type="ordered locus">CLI_1793</name>
</gene>
<dbReference type="EC" id="2.5.1.75" evidence="1"/>
<dbReference type="EMBL" id="CP000728">
    <property type="protein sequence ID" value="ABS40957.1"/>
    <property type="molecule type" value="Genomic_DNA"/>
</dbReference>
<dbReference type="RefSeq" id="WP_012099791.1">
    <property type="nucleotide sequence ID" value="NC_009699.1"/>
</dbReference>
<dbReference type="SMR" id="A7GE43"/>
<dbReference type="KEGG" id="cbf:CLI_1793"/>
<dbReference type="HOGENOM" id="CLU_032616_0_1_9"/>
<dbReference type="Proteomes" id="UP000002410">
    <property type="component" value="Chromosome"/>
</dbReference>
<dbReference type="GO" id="GO:0005524">
    <property type="term" value="F:ATP binding"/>
    <property type="evidence" value="ECO:0007669"/>
    <property type="project" value="UniProtKB-UniRule"/>
</dbReference>
<dbReference type="GO" id="GO:0052381">
    <property type="term" value="F:tRNA dimethylallyltransferase activity"/>
    <property type="evidence" value="ECO:0007669"/>
    <property type="project" value="UniProtKB-UniRule"/>
</dbReference>
<dbReference type="GO" id="GO:0006400">
    <property type="term" value="P:tRNA modification"/>
    <property type="evidence" value="ECO:0007669"/>
    <property type="project" value="TreeGrafter"/>
</dbReference>
<dbReference type="FunFam" id="1.10.20.140:FF:000001">
    <property type="entry name" value="tRNA dimethylallyltransferase"/>
    <property type="match status" value="1"/>
</dbReference>
<dbReference type="Gene3D" id="1.10.20.140">
    <property type="match status" value="1"/>
</dbReference>
<dbReference type="Gene3D" id="3.40.50.300">
    <property type="entry name" value="P-loop containing nucleotide triphosphate hydrolases"/>
    <property type="match status" value="1"/>
</dbReference>
<dbReference type="HAMAP" id="MF_00185">
    <property type="entry name" value="IPP_trans"/>
    <property type="match status" value="1"/>
</dbReference>
<dbReference type="InterPro" id="IPR039657">
    <property type="entry name" value="Dimethylallyltransferase"/>
</dbReference>
<dbReference type="InterPro" id="IPR018022">
    <property type="entry name" value="IPT"/>
</dbReference>
<dbReference type="InterPro" id="IPR027417">
    <property type="entry name" value="P-loop_NTPase"/>
</dbReference>
<dbReference type="NCBIfam" id="TIGR00174">
    <property type="entry name" value="miaA"/>
    <property type="match status" value="1"/>
</dbReference>
<dbReference type="PANTHER" id="PTHR11088">
    <property type="entry name" value="TRNA DIMETHYLALLYLTRANSFERASE"/>
    <property type="match status" value="1"/>
</dbReference>
<dbReference type="PANTHER" id="PTHR11088:SF60">
    <property type="entry name" value="TRNA DIMETHYLALLYLTRANSFERASE"/>
    <property type="match status" value="1"/>
</dbReference>
<dbReference type="Pfam" id="PF01715">
    <property type="entry name" value="IPPT"/>
    <property type="match status" value="1"/>
</dbReference>
<dbReference type="SUPFAM" id="SSF52540">
    <property type="entry name" value="P-loop containing nucleoside triphosphate hydrolases"/>
    <property type="match status" value="2"/>
</dbReference>
<organism>
    <name type="scientific">Clostridium botulinum (strain Langeland / NCTC 10281 / Type F)</name>
    <dbReference type="NCBI Taxonomy" id="441772"/>
    <lineage>
        <taxon>Bacteria</taxon>
        <taxon>Bacillati</taxon>
        <taxon>Bacillota</taxon>
        <taxon>Clostridia</taxon>
        <taxon>Eubacteriales</taxon>
        <taxon>Clostridiaceae</taxon>
        <taxon>Clostridium</taxon>
    </lineage>
</organism>